<geneLocation type="mitochondrion"/>
<geneLocation type="plasmid">
    <name>Gel-kalDNA</name>
</geneLocation>
<feature type="chain" id="PRO_0000087755" description="Probable DNA-directed RNA polymerase">
    <location>
        <begin position="1"/>
        <end position="831"/>
    </location>
</feature>
<feature type="active site" evidence="1">
    <location>
        <position position="490"/>
    </location>
</feature>
<feature type="active site" evidence="1">
    <location>
        <position position="560"/>
    </location>
</feature>
<feature type="active site" evidence="1">
    <location>
        <position position="738"/>
    </location>
</feature>
<sequence length="831" mass="96881">MECIERLRRKRTEYLFKNFIMIKFSFFNYRINMRNFHATSLRFIKFNYSAIKNIRNFSTEKKSEPKLSLFLTNISKILSEHKKDLYKAQEIIETEWLKLATPSIDVKSDIKSTMYAKQRLIHGRAFDLLKLYKSNGNLNKISKSLKDYIVNEKFIFIAWSYLLASYSKSSLPNLDYRIGYSITRHIYRESYKNDFMSFEDFPEYNKFDLGFFVKLGDIFINTFTSPLNPIFERVFENEIYSLKINKEYEYEIMESLVISPKALPMVCPPLIWWHGIRGGSVINLNDNADDSLVVGSFHHSHKIAISDKLYSVINKLNAFKFKINADLLSYLQNEGSFIIDFYKKTKKDTYINNMITLDIAKTYLNTPFYLNVNIDWRGRIYTQSFYLGYQGSELSLALINLFEGQKLDEEGLFFFYVYGANIYNEGGKFSKKSFQDRFNWVVENLDNIIAMDKDFILKAESPTLFAAFCLTMRKLKENPDHPVFNPIFLDATCSGVQHFAAMLLDLELGKYVNLINSGESVNDFYSQLIPAINKAINESAEKKLKNVKFSDISLNRSLLKKVIMTKSYNVTTYGITEQLKSKLEKVEKIIISKGKEIKVYDYLVPTKNGKFVVLDTFEVETLASIINDNIFNQFPKLHSIYEYLTRLTKIYLKLDIPISCSTPDGLELTQRYNLSKVQKLTINFLGKNRTAVLRSWVSDKDSRREVPAIIPNIIHSLDAAHLPMLIDSWDSYILPIHDCFGTHPNDMFKLAEQVRECFILLYSKNDFLSKIDSKFRENLKDYKIEIVNKNGEDFVKIKGTPRYDYLPLPVLPQMGELNVEDIRDMGKYMIS</sequence>
<protein>
    <recommendedName>
        <fullName>Probable DNA-directed RNA polymerase</fullName>
        <ecNumber>2.7.7.6</ecNumber>
    </recommendedName>
</protein>
<keyword id="KW-0240">DNA-directed RNA polymerase</keyword>
<keyword id="KW-0496">Mitochondrion</keyword>
<keyword id="KW-0548">Nucleotidyltransferase</keyword>
<keyword id="KW-0614">Plasmid</keyword>
<keyword id="KW-0804">Transcription</keyword>
<keyword id="KW-0808">Transferase</keyword>
<reference key="1">
    <citation type="journal article" date="1996" name="Curr. Genet.">
        <title>Structure of a Gelasinospora linear plasmid closely related to the kalilo plasmid of Neurospora intermedia.</title>
        <authorList>
            <person name="Yuewang W."/>
            <person name="Yang X."/>
            <person name="Griffiths A.J."/>
        </authorList>
    </citation>
    <scope>NUCLEOTIDE SEQUENCE [GENOMIC DNA]</scope>
</reference>
<name>RPOP_GELSP</name>
<organism>
    <name type="scientific">Gelasinospora sp. (strain G114)</name>
    <dbReference type="NCBI Taxonomy" id="42248"/>
    <lineage>
        <taxon>Eukaryota</taxon>
        <taxon>Fungi</taxon>
        <taxon>Dikarya</taxon>
        <taxon>Ascomycota</taxon>
        <taxon>Pezizomycotina</taxon>
        <taxon>Sordariomycetes</taxon>
        <taxon>Sordariomycetidae</taxon>
        <taxon>Sordariales</taxon>
        <taxon>Sordariaceae</taxon>
        <taxon>Gelasinospora</taxon>
    </lineage>
</organism>
<proteinExistence type="inferred from homology"/>
<accession>O03685</accession>
<dbReference type="EC" id="2.7.7.6"/>
<dbReference type="EMBL" id="L40494">
    <property type="protein sequence ID" value="AAB41448.1"/>
    <property type="molecule type" value="Genomic_DNA"/>
</dbReference>
<dbReference type="PIR" id="S62751">
    <property type="entry name" value="S62751"/>
</dbReference>
<dbReference type="SMR" id="O03685"/>
<dbReference type="GO" id="GO:0034245">
    <property type="term" value="C:mitochondrial DNA-directed RNA polymerase complex"/>
    <property type="evidence" value="ECO:0007669"/>
    <property type="project" value="TreeGrafter"/>
</dbReference>
<dbReference type="GO" id="GO:0003899">
    <property type="term" value="F:DNA-directed RNA polymerase activity"/>
    <property type="evidence" value="ECO:0007669"/>
    <property type="project" value="UniProtKB-EC"/>
</dbReference>
<dbReference type="GO" id="GO:0001018">
    <property type="term" value="F:mitochondrial promoter sequence-specific DNA binding"/>
    <property type="evidence" value="ECO:0007669"/>
    <property type="project" value="TreeGrafter"/>
</dbReference>
<dbReference type="GO" id="GO:0006390">
    <property type="term" value="P:mitochondrial transcription"/>
    <property type="evidence" value="ECO:0007669"/>
    <property type="project" value="TreeGrafter"/>
</dbReference>
<dbReference type="Gene3D" id="1.10.287.280">
    <property type="match status" value="1"/>
</dbReference>
<dbReference type="Gene3D" id="1.10.150.20">
    <property type="entry name" value="5' to 3' exonuclease, C-terminal subdomain"/>
    <property type="match status" value="1"/>
</dbReference>
<dbReference type="InterPro" id="IPR046950">
    <property type="entry name" value="DNA-dir_Rpol_C_phage-type"/>
</dbReference>
<dbReference type="InterPro" id="IPR002092">
    <property type="entry name" value="DNA-dir_Rpol_phage-type"/>
</dbReference>
<dbReference type="InterPro" id="IPR043502">
    <property type="entry name" value="DNA/RNA_pol_sf"/>
</dbReference>
<dbReference type="PANTHER" id="PTHR10102">
    <property type="entry name" value="DNA-DIRECTED RNA POLYMERASE, MITOCHONDRIAL"/>
    <property type="match status" value="1"/>
</dbReference>
<dbReference type="PANTHER" id="PTHR10102:SF0">
    <property type="entry name" value="DNA-DIRECTED RNA POLYMERASE, MITOCHONDRIAL"/>
    <property type="match status" value="1"/>
</dbReference>
<dbReference type="Pfam" id="PF00940">
    <property type="entry name" value="RNA_pol"/>
    <property type="match status" value="1"/>
</dbReference>
<dbReference type="SUPFAM" id="SSF56672">
    <property type="entry name" value="DNA/RNA polymerases"/>
    <property type="match status" value="1"/>
</dbReference>
<dbReference type="PROSITE" id="PS00900">
    <property type="entry name" value="RNA_POL_PHAGE_1"/>
    <property type="match status" value="1"/>
</dbReference>
<dbReference type="PROSITE" id="PS00489">
    <property type="entry name" value="RNA_POL_PHAGE_2"/>
    <property type="match status" value="1"/>
</dbReference>
<evidence type="ECO:0000250" key="1"/>
<evidence type="ECO:0000255" key="2">
    <source>
        <dbReference type="PROSITE-ProRule" id="PRU10031"/>
    </source>
</evidence>
<evidence type="ECO:0000255" key="3">
    <source>
        <dbReference type="PROSITE-ProRule" id="PRU10032"/>
    </source>
</evidence>
<evidence type="ECO:0000305" key="4"/>
<comment type="function">
    <text>DNA-dependent RNA polymerase catalyzes the transcription of DNA into RNA using the four ribonucleoside triphosphates as substrates.</text>
</comment>
<comment type="catalytic activity">
    <reaction evidence="2 3">
        <text>RNA(n) + a ribonucleoside 5'-triphosphate = RNA(n+1) + diphosphate</text>
        <dbReference type="Rhea" id="RHEA:21248"/>
        <dbReference type="Rhea" id="RHEA-COMP:14527"/>
        <dbReference type="Rhea" id="RHEA-COMP:17342"/>
        <dbReference type="ChEBI" id="CHEBI:33019"/>
        <dbReference type="ChEBI" id="CHEBI:61557"/>
        <dbReference type="ChEBI" id="CHEBI:140395"/>
        <dbReference type="EC" id="2.7.7.6"/>
    </reaction>
</comment>
<comment type="subcellular location">
    <subcellularLocation>
        <location evidence="4">Mitochondrion</location>
    </subcellularLocation>
</comment>
<comment type="similarity">
    <text evidence="4">Belongs to the phage and mitochondrial RNA polymerase family.</text>
</comment>